<organism>
    <name type="scientific">Crotalus viridis viridis</name>
    <name type="common">Prairie rattlesnake</name>
    <dbReference type="NCBI Taxonomy" id="8742"/>
    <lineage>
        <taxon>Eukaryota</taxon>
        <taxon>Metazoa</taxon>
        <taxon>Chordata</taxon>
        <taxon>Craniata</taxon>
        <taxon>Vertebrata</taxon>
        <taxon>Euteleostomi</taxon>
        <taxon>Lepidosauria</taxon>
        <taxon>Squamata</taxon>
        <taxon>Bifurcata</taxon>
        <taxon>Unidentata</taxon>
        <taxon>Episquamata</taxon>
        <taxon>Toxicofera</taxon>
        <taxon>Serpentes</taxon>
        <taxon>Colubroidea</taxon>
        <taxon>Viperidae</taxon>
        <taxon>Crotalinae</taxon>
        <taxon>Crotalus</taxon>
    </lineage>
</organism>
<name>PA2BN_CROVV</name>
<protein>
    <recommendedName>
        <fullName evidence="6 7">Basic phospholipase A2 Cvv-N6</fullName>
        <shortName>svPLA2</shortName>
        <ecNumber>3.1.1.4</ecNumber>
    </recommendedName>
    <alternativeName>
        <fullName evidence="8 9">Cvv myotoxin</fullName>
    </alternativeName>
    <alternativeName>
        <fullName>Phosphatidylcholine 2-acylhydrolase</fullName>
    </alternativeName>
</protein>
<proteinExistence type="evidence at protein level"/>
<comment type="function">
    <text evidence="2 3 4">Snake venom phospholipase A2 (PLA2) that is myotoxic and displays moderate edema-inducing activity in rat paws (PubMed:12623078, PubMed:9028014). Does not show neurotoxic activity (PubMed:15032748, PubMed:9028014). PLA2 catalyzes the calcium-dependent hydrolysis of the 2-acyl groups in 3-sn-phosphoglycerides.</text>
</comment>
<comment type="catalytic activity">
    <reaction evidence="2 3">
        <text>a 1,2-diacyl-sn-glycero-3-phosphocholine + H2O = a 1-acyl-sn-glycero-3-phosphocholine + a fatty acid + H(+)</text>
        <dbReference type="Rhea" id="RHEA:15801"/>
        <dbReference type="ChEBI" id="CHEBI:15377"/>
        <dbReference type="ChEBI" id="CHEBI:15378"/>
        <dbReference type="ChEBI" id="CHEBI:28868"/>
        <dbReference type="ChEBI" id="CHEBI:57643"/>
        <dbReference type="ChEBI" id="CHEBI:58168"/>
        <dbReference type="EC" id="3.1.1.4"/>
    </reaction>
</comment>
<comment type="cofactor">
    <cofactor evidence="2">
        <name>Ca(2+)</name>
        <dbReference type="ChEBI" id="CHEBI:29108"/>
    </cofactor>
    <text evidence="2">Binds 1 Ca(2+) ion.</text>
</comment>
<comment type="activity regulation">
    <text evidence="4 5">Heparin and wedelolactone inhibit the myotoxic activity (PubMed:9920492). The PLA2 inhibitor, para-bromophenacyl bromide (BPB), inhibits enzymatic and myotoxic activities (PubMed:9028014, PubMed:9920492).</text>
</comment>
<comment type="biophysicochemical properties">
    <kinetics>
        <Vmax evidence="3">280.0 umol/min/mg enzyme with DPPC + deoxycholate as substrate (at pH 7.4 and 37 degrees Celsius)</Vmax>
        <Vmax evidence="3">88.0 umol/min/mg enzyme with DPPC + Triton X-100 as substrate (at pH 7.4 and 37 degrees Celsius)</Vmax>
        <text>When tested as a monomer.</text>
    </kinetics>
</comment>
<comment type="subunit">
    <text evidence="3 4">Monomer (PubMed:15032748, PubMed:9028014). Binds to calmodulin (PubMed:15032748).</text>
</comment>
<comment type="subcellular location">
    <subcellularLocation>
        <location>Secreted</location>
    </subcellularLocation>
</comment>
<comment type="tissue specificity">
    <text>Expressed by the venom gland.</text>
</comment>
<comment type="mass spectrometry"/>
<comment type="miscellaneous">
    <text>Negative results: does not show neurotoxic activities (PubMed:15032748, PubMed:9028014).</text>
</comment>
<comment type="similarity">
    <text evidence="10">Belongs to the phospholipase A2 family. Group II subfamily. D49 sub-subfamily.</text>
</comment>
<keyword id="KW-0106">Calcium</keyword>
<keyword id="KW-0903">Direct protein sequencing</keyword>
<keyword id="KW-1015">Disulfide bond</keyword>
<keyword id="KW-0378">Hydrolase</keyword>
<keyword id="KW-0442">Lipid degradation</keyword>
<keyword id="KW-0443">Lipid metabolism</keyword>
<keyword id="KW-0479">Metal-binding</keyword>
<keyword id="KW-0959">Myotoxin</keyword>
<keyword id="KW-0964">Secreted</keyword>
<keyword id="KW-0732">Signal</keyword>
<keyword id="KW-0800">Toxin</keyword>
<dbReference type="EC" id="3.1.1.4"/>
<dbReference type="EMBL" id="AF403138">
    <property type="protein sequence ID" value="AAQ13337.1"/>
    <property type="molecule type" value="mRNA"/>
</dbReference>
<dbReference type="SMR" id="Q71QE8"/>
<dbReference type="GO" id="GO:0005576">
    <property type="term" value="C:extracellular region"/>
    <property type="evidence" value="ECO:0007669"/>
    <property type="project" value="UniProtKB-SubCell"/>
</dbReference>
<dbReference type="GO" id="GO:0005509">
    <property type="term" value="F:calcium ion binding"/>
    <property type="evidence" value="ECO:0007669"/>
    <property type="project" value="InterPro"/>
</dbReference>
<dbReference type="GO" id="GO:0047498">
    <property type="term" value="F:calcium-dependent phospholipase A2 activity"/>
    <property type="evidence" value="ECO:0007669"/>
    <property type="project" value="TreeGrafter"/>
</dbReference>
<dbReference type="GO" id="GO:0005543">
    <property type="term" value="F:phospholipid binding"/>
    <property type="evidence" value="ECO:0007669"/>
    <property type="project" value="TreeGrafter"/>
</dbReference>
<dbReference type="GO" id="GO:0090729">
    <property type="term" value="F:toxin activity"/>
    <property type="evidence" value="ECO:0007669"/>
    <property type="project" value="UniProtKB-KW"/>
</dbReference>
<dbReference type="GO" id="GO:0050482">
    <property type="term" value="P:arachidonate secretion"/>
    <property type="evidence" value="ECO:0007669"/>
    <property type="project" value="InterPro"/>
</dbReference>
<dbReference type="GO" id="GO:0016042">
    <property type="term" value="P:lipid catabolic process"/>
    <property type="evidence" value="ECO:0007669"/>
    <property type="project" value="UniProtKB-KW"/>
</dbReference>
<dbReference type="GO" id="GO:0042130">
    <property type="term" value="P:negative regulation of T cell proliferation"/>
    <property type="evidence" value="ECO:0007669"/>
    <property type="project" value="TreeGrafter"/>
</dbReference>
<dbReference type="GO" id="GO:0006644">
    <property type="term" value="P:phospholipid metabolic process"/>
    <property type="evidence" value="ECO:0007669"/>
    <property type="project" value="InterPro"/>
</dbReference>
<dbReference type="CDD" id="cd00125">
    <property type="entry name" value="PLA2c"/>
    <property type="match status" value="1"/>
</dbReference>
<dbReference type="FunFam" id="1.20.90.10:FF:000001">
    <property type="entry name" value="Basic phospholipase A2 homolog"/>
    <property type="match status" value="1"/>
</dbReference>
<dbReference type="Gene3D" id="1.20.90.10">
    <property type="entry name" value="Phospholipase A2 domain"/>
    <property type="match status" value="1"/>
</dbReference>
<dbReference type="InterPro" id="IPR001211">
    <property type="entry name" value="PLipase_A2"/>
</dbReference>
<dbReference type="InterPro" id="IPR033112">
    <property type="entry name" value="PLipase_A2_Asp_AS"/>
</dbReference>
<dbReference type="InterPro" id="IPR016090">
    <property type="entry name" value="PLipase_A2_dom"/>
</dbReference>
<dbReference type="InterPro" id="IPR036444">
    <property type="entry name" value="PLipase_A2_dom_sf"/>
</dbReference>
<dbReference type="InterPro" id="IPR033113">
    <property type="entry name" value="PLipase_A2_His_AS"/>
</dbReference>
<dbReference type="PANTHER" id="PTHR11716">
    <property type="entry name" value="PHOSPHOLIPASE A2 FAMILY MEMBER"/>
    <property type="match status" value="1"/>
</dbReference>
<dbReference type="PANTHER" id="PTHR11716:SF9">
    <property type="entry name" value="PHOSPHOLIPASE A2, MEMBRANE ASSOCIATED"/>
    <property type="match status" value="1"/>
</dbReference>
<dbReference type="Pfam" id="PF00068">
    <property type="entry name" value="Phospholip_A2_1"/>
    <property type="match status" value="1"/>
</dbReference>
<dbReference type="PRINTS" id="PR00389">
    <property type="entry name" value="PHPHLIPASEA2"/>
</dbReference>
<dbReference type="SMART" id="SM00085">
    <property type="entry name" value="PA2c"/>
    <property type="match status" value="1"/>
</dbReference>
<dbReference type="SUPFAM" id="SSF48619">
    <property type="entry name" value="Phospholipase A2, PLA2"/>
    <property type="match status" value="1"/>
</dbReference>
<dbReference type="PROSITE" id="PS00119">
    <property type="entry name" value="PA2_ASP"/>
    <property type="match status" value="1"/>
</dbReference>
<dbReference type="PROSITE" id="PS00118">
    <property type="entry name" value="PA2_HIS"/>
    <property type="match status" value="1"/>
</dbReference>
<sequence>MRTFWIVALLLVGVEGNLLQFNKMIKMMTKKNAFPFYTSYGCYCGWGGRGRPKDATDRCCFVHDCCYEKLTNCSPKTDIYSYSWKRGVIICGKGTPCEKQICECDRAAAVCFRENLPTYKKRYMFYLDFLCTDPSEKC</sequence>
<accession>Q71QE8</accession>
<feature type="signal peptide" evidence="2 3 4">
    <location>
        <begin position="1"/>
        <end position="16"/>
    </location>
</feature>
<feature type="chain" id="PRO_0000418574" description="Basic phospholipase A2 Cvv-N6">
    <location>
        <begin position="17"/>
        <end position="138"/>
    </location>
</feature>
<feature type="active site" evidence="1">
    <location>
        <position position="63"/>
    </location>
</feature>
<feature type="active site" evidence="1">
    <location>
        <position position="105"/>
    </location>
</feature>
<feature type="binding site" evidence="1">
    <location>
        <position position="43"/>
    </location>
    <ligand>
        <name>Ca(2+)</name>
        <dbReference type="ChEBI" id="CHEBI:29108"/>
    </ligand>
</feature>
<feature type="binding site" evidence="1">
    <location>
        <position position="45"/>
    </location>
    <ligand>
        <name>Ca(2+)</name>
        <dbReference type="ChEBI" id="CHEBI:29108"/>
    </ligand>
</feature>
<feature type="binding site" evidence="1">
    <location>
        <position position="47"/>
    </location>
    <ligand>
        <name>Ca(2+)</name>
        <dbReference type="ChEBI" id="CHEBI:29108"/>
    </ligand>
</feature>
<feature type="binding site" evidence="1">
    <location>
        <position position="64"/>
    </location>
    <ligand>
        <name>Ca(2+)</name>
        <dbReference type="ChEBI" id="CHEBI:29108"/>
    </ligand>
</feature>
<feature type="disulfide bond" evidence="1">
    <location>
        <begin position="42"/>
        <end position="131"/>
    </location>
</feature>
<feature type="disulfide bond" evidence="1">
    <location>
        <begin position="44"/>
        <end position="60"/>
    </location>
</feature>
<feature type="disulfide bond" evidence="1">
    <location>
        <begin position="59"/>
        <end position="111"/>
    </location>
</feature>
<feature type="disulfide bond" evidence="1">
    <location>
        <begin position="65"/>
        <end position="138"/>
    </location>
</feature>
<feature type="disulfide bond" evidence="1">
    <location>
        <begin position="66"/>
        <end position="104"/>
    </location>
</feature>
<feature type="disulfide bond" evidence="1">
    <location>
        <begin position="73"/>
        <end position="97"/>
    </location>
</feature>
<feature type="disulfide bond" evidence="1">
    <location>
        <begin position="91"/>
        <end position="102"/>
    </location>
</feature>
<feature type="sequence conflict" description="In Ref. 1; AA sequence." evidence="10" ref="1">
    <original>M</original>
    <variation>E</variation>
    <location>
        <position position="28"/>
    </location>
</feature>
<feature type="sequence conflict" description="In Ref. 1; AA sequence." evidence="10" ref="1">
    <original>T</original>
    <variation>A</variation>
    <location>
        <position position="38"/>
    </location>
</feature>
<feature type="sequence conflict" description="In Ref. 2; AA sequence." evidence="10" ref="2">
    <original>G</original>
    <variation>W</variation>
    <location>
        <position position="47"/>
    </location>
</feature>
<evidence type="ECO:0000250" key="1">
    <source>
        <dbReference type="UniProtKB" id="O42187"/>
    </source>
</evidence>
<evidence type="ECO:0000269" key="2">
    <source>
    </source>
</evidence>
<evidence type="ECO:0000269" key="3">
    <source>
    </source>
</evidence>
<evidence type="ECO:0000269" key="4">
    <source>
    </source>
</evidence>
<evidence type="ECO:0000269" key="5">
    <source>
    </source>
</evidence>
<evidence type="ECO:0000303" key="6">
    <source>
    </source>
</evidence>
<evidence type="ECO:0000303" key="7">
    <source>
    </source>
</evidence>
<evidence type="ECO:0000303" key="8">
    <source>
    </source>
</evidence>
<evidence type="ECO:0000303" key="9">
    <source>
    </source>
</evidence>
<evidence type="ECO:0000305" key="10"/>
<reference key="1">
    <citation type="journal article" date="2004" name="Biochem. J.">
        <title>Molecular evolution and structure-function relationships of crotoxin-like and asparagine-6-containing phospholipases A2 in pit viper venoms.</title>
        <authorList>
            <person name="Chen Y.-H."/>
            <person name="Wang Y.-M."/>
            <person name="Hseu M.-J."/>
            <person name="Tsai I.-H."/>
        </authorList>
    </citation>
    <scope>NUCLEOTIDE SEQUENCE [MRNA]</scope>
    <scope>PROTEIN SEQUENCE OF 17-39</scope>
    <scope>FUNCTION</scope>
    <scope>CATALYTIC ACTIVITY</scope>
    <scope>BIOPHYSICOCHEMICAL PROPERTIES</scope>
    <scope>SUBUNIT</scope>
    <scope>MASS SPECTROMETRY</scope>
    <scope>SUBCELLULAR LOCATION</scope>
    <source>
        <tissue>Venom</tissue>
        <tissue>Venom gland</tissue>
    </source>
</reference>
<reference key="2">
    <citation type="journal article" date="1997" name="Toxicon">
        <title>Isolation, characterization and crystallization of a phospholipase A2 myotoxin from the venom of the prairie rattlesnake (Crotalus viridis viridis).</title>
        <authorList>
            <person name="Ownby C.L."/>
            <person name="Colberg T.R."/>
            <person name="White S.P."/>
        </authorList>
    </citation>
    <scope>PROTEIN SEQUENCE OF 17-49</scope>
    <scope>FUNCTION</scope>
    <scope>ACTIVITY REGULATION</scope>
    <scope>SUBUNIT</scope>
    <scope>CRYSTALLIZATION</scope>
    <scope>SUBCELLULAR LOCATION</scope>
    <source>
        <tissue>Venom</tissue>
    </source>
</reference>
<reference key="3">
    <citation type="journal article" date="2003" name="Arch. Biochem. Biophys.">
        <title>Geographic variations, cloning, and functional analyses of the venom acidic phospholipases A2 of Crotalus viridis viridis.</title>
        <authorList>
            <person name="Tsai I.-H."/>
            <person name="Wang Y.-M."/>
            <person name="Chen Y.-H."/>
            <person name="Tu A.T."/>
        </authorList>
    </citation>
    <scope>PROTEIN SEQUENCE OF 17-39</scope>
    <scope>FUNCTION</scope>
    <scope>CATALYTIC ACTIVITY</scope>
    <scope>COFACTOR</scope>
    <scope>MASS SPECTROMETRY</scope>
    <scope>SUBCELLULAR LOCATION</scope>
    <source>
        <strain>Colorado</strain>
        <strain>New Mexico</strain>
        <strain>South Dakota</strain>
        <strain>Southeastern Arizona</strain>
        <strain>Texas</strain>
        <strain>Western Oklahoma</strain>
        <strain>Wyoming</strain>
        <tissue>Venom</tissue>
        <tissue>Venom gland</tissue>
    </source>
</reference>
<reference key="4">
    <citation type="journal article" date="1999" name="Toxicon">
        <title>Ability of wedelolactone, heparin, and para-bromophenacyl bromide to antagonize the myotoxic effects of two crotaline venoms and their PLA2 myotoxins.</title>
        <authorList>
            <person name="Melo P.A."/>
            <person name="Ownby C.L."/>
        </authorList>
    </citation>
    <scope>FUNCTION</scope>
    <scope>SUBUNIT</scope>
    <scope>ACTIVITY REGULATION</scope>
    <source>
        <tissue>Venom</tissue>
    </source>
</reference>